<proteinExistence type="inferred from homology"/>
<comment type="function">
    <text evidence="1">Involved in unsaturated fatty acids biosynthesis. Catalyzes the dehydration of short chain beta-hydroxyacyl-ACPs and long chain saturated and unsaturated beta-hydroxyacyl-ACPs.</text>
</comment>
<comment type="catalytic activity">
    <reaction evidence="1">
        <text>a (3R)-hydroxyacyl-[ACP] = a (2E)-enoyl-[ACP] + H2O</text>
        <dbReference type="Rhea" id="RHEA:13097"/>
        <dbReference type="Rhea" id="RHEA-COMP:9925"/>
        <dbReference type="Rhea" id="RHEA-COMP:9945"/>
        <dbReference type="ChEBI" id="CHEBI:15377"/>
        <dbReference type="ChEBI" id="CHEBI:78784"/>
        <dbReference type="ChEBI" id="CHEBI:78827"/>
        <dbReference type="EC" id="4.2.1.59"/>
    </reaction>
</comment>
<comment type="subcellular location">
    <subcellularLocation>
        <location evidence="1">Cytoplasm</location>
    </subcellularLocation>
</comment>
<comment type="similarity">
    <text evidence="1">Belongs to the thioester dehydratase family. FabZ subfamily.</text>
</comment>
<feature type="chain" id="PRO_0000242899" description="3-hydroxyacyl-[acyl-carrier-protein] dehydratase FabZ">
    <location>
        <begin position="1"/>
        <end position="145"/>
    </location>
</feature>
<feature type="active site" evidence="1">
    <location>
        <position position="49"/>
    </location>
</feature>
<name>FABZ_RICBR</name>
<sequence>MTIDITEIMDLIPHRYPFLLVDKVVEIDPNKSITGIKNVTVNEPQFTGHFPARPVMPGVLMVEAMAQLAAILVAKSLGSTKNKEVFLMAIENSKFRKVVQPGDTMHIHATIDQQRANVWKFSSTVKVDGEMAAESKFTAMIKDKS</sequence>
<dbReference type="EC" id="4.2.1.59" evidence="1"/>
<dbReference type="EMBL" id="CP000087">
    <property type="protein sequence ID" value="ABE05269.1"/>
    <property type="molecule type" value="Genomic_DNA"/>
</dbReference>
<dbReference type="RefSeq" id="WP_011477847.1">
    <property type="nucleotide sequence ID" value="NC_007940.1"/>
</dbReference>
<dbReference type="SMR" id="Q1RH95"/>
<dbReference type="KEGG" id="rbe:RBE_1188"/>
<dbReference type="eggNOG" id="COG0764">
    <property type="taxonomic scope" value="Bacteria"/>
</dbReference>
<dbReference type="HOGENOM" id="CLU_078912_1_2_5"/>
<dbReference type="OrthoDB" id="9772788at2"/>
<dbReference type="Proteomes" id="UP000001951">
    <property type="component" value="Chromosome"/>
</dbReference>
<dbReference type="GO" id="GO:0005737">
    <property type="term" value="C:cytoplasm"/>
    <property type="evidence" value="ECO:0007669"/>
    <property type="project" value="UniProtKB-SubCell"/>
</dbReference>
<dbReference type="GO" id="GO:0016020">
    <property type="term" value="C:membrane"/>
    <property type="evidence" value="ECO:0007669"/>
    <property type="project" value="GOC"/>
</dbReference>
<dbReference type="GO" id="GO:0019171">
    <property type="term" value="F:(3R)-hydroxyacyl-[acyl-carrier-protein] dehydratase activity"/>
    <property type="evidence" value="ECO:0007669"/>
    <property type="project" value="UniProtKB-EC"/>
</dbReference>
<dbReference type="GO" id="GO:0006633">
    <property type="term" value="P:fatty acid biosynthetic process"/>
    <property type="evidence" value="ECO:0007669"/>
    <property type="project" value="UniProtKB-UniRule"/>
</dbReference>
<dbReference type="GO" id="GO:0009245">
    <property type="term" value="P:lipid A biosynthetic process"/>
    <property type="evidence" value="ECO:0007669"/>
    <property type="project" value="UniProtKB-UniRule"/>
</dbReference>
<dbReference type="CDD" id="cd01288">
    <property type="entry name" value="FabZ"/>
    <property type="match status" value="1"/>
</dbReference>
<dbReference type="FunFam" id="3.10.129.10:FF:000001">
    <property type="entry name" value="3-hydroxyacyl-[acyl-carrier-protein] dehydratase FabZ"/>
    <property type="match status" value="1"/>
</dbReference>
<dbReference type="Gene3D" id="3.10.129.10">
    <property type="entry name" value="Hotdog Thioesterase"/>
    <property type="match status" value="1"/>
</dbReference>
<dbReference type="HAMAP" id="MF_00406">
    <property type="entry name" value="FabZ"/>
    <property type="match status" value="1"/>
</dbReference>
<dbReference type="InterPro" id="IPR013114">
    <property type="entry name" value="FabA_FabZ"/>
</dbReference>
<dbReference type="InterPro" id="IPR010084">
    <property type="entry name" value="FabZ"/>
</dbReference>
<dbReference type="InterPro" id="IPR029069">
    <property type="entry name" value="HotDog_dom_sf"/>
</dbReference>
<dbReference type="NCBIfam" id="TIGR01750">
    <property type="entry name" value="fabZ"/>
    <property type="match status" value="1"/>
</dbReference>
<dbReference type="NCBIfam" id="NF000582">
    <property type="entry name" value="PRK00006.1"/>
    <property type="match status" value="1"/>
</dbReference>
<dbReference type="PANTHER" id="PTHR30272">
    <property type="entry name" value="3-HYDROXYACYL-[ACYL-CARRIER-PROTEIN] DEHYDRATASE"/>
    <property type="match status" value="1"/>
</dbReference>
<dbReference type="PANTHER" id="PTHR30272:SF1">
    <property type="entry name" value="3-HYDROXYACYL-[ACYL-CARRIER-PROTEIN] DEHYDRATASE"/>
    <property type="match status" value="1"/>
</dbReference>
<dbReference type="Pfam" id="PF07977">
    <property type="entry name" value="FabA"/>
    <property type="match status" value="1"/>
</dbReference>
<dbReference type="SUPFAM" id="SSF54637">
    <property type="entry name" value="Thioesterase/thiol ester dehydrase-isomerase"/>
    <property type="match status" value="1"/>
</dbReference>
<protein>
    <recommendedName>
        <fullName evidence="1">3-hydroxyacyl-[acyl-carrier-protein] dehydratase FabZ</fullName>
        <ecNumber evidence="1">4.2.1.59</ecNumber>
    </recommendedName>
    <alternativeName>
        <fullName evidence="1">(3R)-hydroxymyristoyl-[acyl-carrier-protein] dehydratase</fullName>
        <shortName evidence="1">(3R)-hydroxymyristoyl-ACP dehydrase</shortName>
    </alternativeName>
    <alternativeName>
        <fullName evidence="1">Beta-hydroxyacyl-ACP dehydratase</fullName>
    </alternativeName>
</protein>
<evidence type="ECO:0000255" key="1">
    <source>
        <dbReference type="HAMAP-Rule" id="MF_00406"/>
    </source>
</evidence>
<reference key="1">
    <citation type="journal article" date="2006" name="PLoS Genet.">
        <title>Genome sequence of Rickettsia bellii illuminates the role of amoebae in gene exchanges between intracellular pathogens.</title>
        <authorList>
            <person name="Ogata H."/>
            <person name="La Scola B."/>
            <person name="Audic S."/>
            <person name="Renesto P."/>
            <person name="Blanc G."/>
            <person name="Robert C."/>
            <person name="Fournier P.-E."/>
            <person name="Claverie J.-M."/>
            <person name="Raoult D."/>
        </authorList>
    </citation>
    <scope>NUCLEOTIDE SEQUENCE [LARGE SCALE GENOMIC DNA]</scope>
    <source>
        <strain>RML369-C</strain>
    </source>
</reference>
<accession>Q1RH95</accession>
<organism>
    <name type="scientific">Rickettsia bellii (strain RML369-C)</name>
    <dbReference type="NCBI Taxonomy" id="336407"/>
    <lineage>
        <taxon>Bacteria</taxon>
        <taxon>Pseudomonadati</taxon>
        <taxon>Pseudomonadota</taxon>
        <taxon>Alphaproteobacteria</taxon>
        <taxon>Rickettsiales</taxon>
        <taxon>Rickettsiaceae</taxon>
        <taxon>Rickettsieae</taxon>
        <taxon>Rickettsia</taxon>
        <taxon>belli group</taxon>
    </lineage>
</organism>
<keyword id="KW-0963">Cytoplasm</keyword>
<keyword id="KW-0441">Lipid A biosynthesis</keyword>
<keyword id="KW-0444">Lipid biosynthesis</keyword>
<keyword id="KW-0443">Lipid metabolism</keyword>
<keyword id="KW-0456">Lyase</keyword>
<gene>
    <name evidence="1" type="primary">fabZ</name>
    <name type="ordered locus">RBE_1188</name>
</gene>